<name>IF1_RICPR</name>
<dbReference type="EMBL" id="AJ235273">
    <property type="protein sequence ID" value="CAA15239.1"/>
    <property type="molecule type" value="Genomic_DNA"/>
</dbReference>
<dbReference type="PIR" id="G71642">
    <property type="entry name" value="G71642"/>
</dbReference>
<dbReference type="RefSeq" id="NP_221163.1">
    <property type="nucleotide sequence ID" value="NC_000963.1"/>
</dbReference>
<dbReference type="RefSeq" id="WP_004596875.1">
    <property type="nucleotide sequence ID" value="NC_000963.1"/>
</dbReference>
<dbReference type="SMR" id="Q9ZCE3"/>
<dbReference type="STRING" id="272947.gene:17555883"/>
<dbReference type="EnsemblBacteria" id="CAA15239">
    <property type="protein sequence ID" value="CAA15239"/>
    <property type="gene ID" value="CAA15239"/>
</dbReference>
<dbReference type="GeneID" id="57569936"/>
<dbReference type="KEGG" id="rpr:RP814"/>
<dbReference type="PATRIC" id="fig|272947.5.peg.849"/>
<dbReference type="eggNOG" id="COG0361">
    <property type="taxonomic scope" value="Bacteria"/>
</dbReference>
<dbReference type="HOGENOM" id="CLU_151267_1_0_5"/>
<dbReference type="OrthoDB" id="9803250at2"/>
<dbReference type="Proteomes" id="UP000002480">
    <property type="component" value="Chromosome"/>
</dbReference>
<dbReference type="GO" id="GO:0005829">
    <property type="term" value="C:cytosol"/>
    <property type="evidence" value="ECO:0007669"/>
    <property type="project" value="TreeGrafter"/>
</dbReference>
<dbReference type="GO" id="GO:0043022">
    <property type="term" value="F:ribosome binding"/>
    <property type="evidence" value="ECO:0007669"/>
    <property type="project" value="UniProtKB-UniRule"/>
</dbReference>
<dbReference type="GO" id="GO:0019843">
    <property type="term" value="F:rRNA binding"/>
    <property type="evidence" value="ECO:0007669"/>
    <property type="project" value="UniProtKB-UniRule"/>
</dbReference>
<dbReference type="GO" id="GO:0003743">
    <property type="term" value="F:translation initiation factor activity"/>
    <property type="evidence" value="ECO:0007669"/>
    <property type="project" value="UniProtKB-UniRule"/>
</dbReference>
<dbReference type="CDD" id="cd04451">
    <property type="entry name" value="S1_IF1"/>
    <property type="match status" value="1"/>
</dbReference>
<dbReference type="FunFam" id="2.40.50.140:FF:000002">
    <property type="entry name" value="Translation initiation factor IF-1"/>
    <property type="match status" value="1"/>
</dbReference>
<dbReference type="Gene3D" id="2.40.50.140">
    <property type="entry name" value="Nucleic acid-binding proteins"/>
    <property type="match status" value="1"/>
</dbReference>
<dbReference type="HAMAP" id="MF_00075">
    <property type="entry name" value="IF_1"/>
    <property type="match status" value="1"/>
</dbReference>
<dbReference type="InterPro" id="IPR012340">
    <property type="entry name" value="NA-bd_OB-fold"/>
</dbReference>
<dbReference type="InterPro" id="IPR006196">
    <property type="entry name" value="RNA-binding_domain_S1_IF1"/>
</dbReference>
<dbReference type="InterPro" id="IPR004368">
    <property type="entry name" value="TIF_IF1"/>
</dbReference>
<dbReference type="NCBIfam" id="TIGR00008">
    <property type="entry name" value="infA"/>
    <property type="match status" value="1"/>
</dbReference>
<dbReference type="PANTHER" id="PTHR33370">
    <property type="entry name" value="TRANSLATION INITIATION FACTOR IF-1, CHLOROPLASTIC"/>
    <property type="match status" value="1"/>
</dbReference>
<dbReference type="PANTHER" id="PTHR33370:SF1">
    <property type="entry name" value="TRANSLATION INITIATION FACTOR IF-1, CHLOROPLASTIC"/>
    <property type="match status" value="1"/>
</dbReference>
<dbReference type="Pfam" id="PF01176">
    <property type="entry name" value="eIF-1a"/>
    <property type="match status" value="1"/>
</dbReference>
<dbReference type="SUPFAM" id="SSF50249">
    <property type="entry name" value="Nucleic acid-binding proteins"/>
    <property type="match status" value="1"/>
</dbReference>
<dbReference type="PROSITE" id="PS50832">
    <property type="entry name" value="S1_IF1_TYPE"/>
    <property type="match status" value="1"/>
</dbReference>
<protein>
    <recommendedName>
        <fullName evidence="1">Translation initiation factor IF-1</fullName>
    </recommendedName>
</protein>
<keyword id="KW-0963">Cytoplasm</keyword>
<keyword id="KW-0396">Initiation factor</keyword>
<keyword id="KW-0648">Protein biosynthesis</keyword>
<keyword id="KW-1185">Reference proteome</keyword>
<keyword id="KW-0694">RNA-binding</keyword>
<keyword id="KW-0699">rRNA-binding</keyword>
<evidence type="ECO:0000255" key="1">
    <source>
        <dbReference type="HAMAP-Rule" id="MF_00075"/>
    </source>
</evidence>
<sequence>MSKDDLIQFTGTVLELLPNATFRVKLENDHIIIAHTSGRMRKNRIRILLGDKVTVEMTPYDLTKGRVIHRH</sequence>
<accession>Q9ZCE3</accession>
<proteinExistence type="inferred from homology"/>
<organism>
    <name type="scientific">Rickettsia prowazekii (strain Madrid E)</name>
    <dbReference type="NCBI Taxonomy" id="272947"/>
    <lineage>
        <taxon>Bacteria</taxon>
        <taxon>Pseudomonadati</taxon>
        <taxon>Pseudomonadota</taxon>
        <taxon>Alphaproteobacteria</taxon>
        <taxon>Rickettsiales</taxon>
        <taxon>Rickettsiaceae</taxon>
        <taxon>Rickettsieae</taxon>
        <taxon>Rickettsia</taxon>
        <taxon>typhus group</taxon>
    </lineage>
</organism>
<gene>
    <name evidence="1" type="primary">infA</name>
    <name type="ordered locus">RP814</name>
</gene>
<feature type="chain" id="PRO_0000095855" description="Translation initiation factor IF-1">
    <location>
        <begin position="1"/>
        <end position="71"/>
    </location>
</feature>
<feature type="domain" description="S1-like" evidence="1">
    <location>
        <begin position="1"/>
        <end position="71"/>
    </location>
</feature>
<reference key="1">
    <citation type="journal article" date="1998" name="Nature">
        <title>The genome sequence of Rickettsia prowazekii and the origin of mitochondria.</title>
        <authorList>
            <person name="Andersson S.G.E."/>
            <person name="Zomorodipour A."/>
            <person name="Andersson J.O."/>
            <person name="Sicheritz-Ponten T."/>
            <person name="Alsmark U.C.M."/>
            <person name="Podowski R.M."/>
            <person name="Naeslund A.K."/>
            <person name="Eriksson A.-S."/>
            <person name="Winkler H.H."/>
            <person name="Kurland C.G."/>
        </authorList>
    </citation>
    <scope>NUCLEOTIDE SEQUENCE [LARGE SCALE GENOMIC DNA]</scope>
    <source>
        <strain>Madrid E</strain>
    </source>
</reference>
<comment type="function">
    <text evidence="1">One of the essential components for the initiation of protein synthesis. Stabilizes the binding of IF-2 and IF-3 on the 30S subunit to which N-formylmethionyl-tRNA(fMet) subsequently binds. Helps modulate mRNA selection, yielding the 30S pre-initiation complex (PIC). Upon addition of the 50S ribosomal subunit IF-1, IF-2 and IF-3 are released leaving the mature 70S translation initiation complex.</text>
</comment>
<comment type="subunit">
    <text evidence="1">Component of the 30S ribosomal translation pre-initiation complex which assembles on the 30S ribosome in the order IF-2 and IF-3, IF-1 and N-formylmethionyl-tRNA(fMet); mRNA recruitment can occur at any time during PIC assembly.</text>
</comment>
<comment type="subcellular location">
    <subcellularLocation>
        <location evidence="1">Cytoplasm</location>
    </subcellularLocation>
</comment>
<comment type="similarity">
    <text evidence="1">Belongs to the IF-1 family.</text>
</comment>